<name>MTNB_CANDC</name>
<accession>B9WHK1</accession>
<organism>
    <name type="scientific">Candida dubliniensis (strain CD36 / ATCC MYA-646 / CBS 7987 / NCPF 3949 / NRRL Y-17841)</name>
    <name type="common">Yeast</name>
    <dbReference type="NCBI Taxonomy" id="573826"/>
    <lineage>
        <taxon>Eukaryota</taxon>
        <taxon>Fungi</taxon>
        <taxon>Dikarya</taxon>
        <taxon>Ascomycota</taxon>
        <taxon>Saccharomycotina</taxon>
        <taxon>Pichiomycetes</taxon>
        <taxon>Debaryomycetaceae</taxon>
        <taxon>Candida/Lodderomyces clade</taxon>
        <taxon>Candida</taxon>
    </lineage>
</organism>
<dbReference type="EC" id="4.2.1.109" evidence="1"/>
<dbReference type="EMBL" id="FM992692">
    <property type="protein sequence ID" value="CAX41643.1"/>
    <property type="molecule type" value="Genomic_DNA"/>
</dbReference>
<dbReference type="RefSeq" id="XP_002420564.1">
    <property type="nucleotide sequence ID" value="XM_002420519.1"/>
</dbReference>
<dbReference type="SMR" id="B9WHK1"/>
<dbReference type="GeneID" id="8048440"/>
<dbReference type="KEGG" id="cdu:CD36_52610"/>
<dbReference type="CGD" id="CAL0000166777">
    <property type="gene designation" value="Cd36_52610"/>
</dbReference>
<dbReference type="VEuPathDB" id="FungiDB:CD36_52610"/>
<dbReference type="eggNOG" id="KOG2631">
    <property type="taxonomic scope" value="Eukaryota"/>
</dbReference>
<dbReference type="HOGENOM" id="CLU_006033_4_0_1"/>
<dbReference type="OrthoDB" id="191080at2759"/>
<dbReference type="UniPathway" id="UPA00904">
    <property type="reaction ID" value="UER00875"/>
</dbReference>
<dbReference type="Proteomes" id="UP000002605">
    <property type="component" value="Chromosome 5"/>
</dbReference>
<dbReference type="GO" id="GO:0005737">
    <property type="term" value="C:cytoplasm"/>
    <property type="evidence" value="ECO:0007669"/>
    <property type="project" value="UniProtKB-SubCell"/>
</dbReference>
<dbReference type="GO" id="GO:0046570">
    <property type="term" value="F:methylthioribulose 1-phosphate dehydratase activity"/>
    <property type="evidence" value="ECO:0007669"/>
    <property type="project" value="UniProtKB-UniRule"/>
</dbReference>
<dbReference type="GO" id="GO:0008270">
    <property type="term" value="F:zinc ion binding"/>
    <property type="evidence" value="ECO:0007669"/>
    <property type="project" value="UniProtKB-UniRule"/>
</dbReference>
<dbReference type="GO" id="GO:0019509">
    <property type="term" value="P:L-methionine salvage from methylthioadenosine"/>
    <property type="evidence" value="ECO:0007669"/>
    <property type="project" value="UniProtKB-UniRule"/>
</dbReference>
<dbReference type="FunFam" id="3.40.225.10:FF:000003">
    <property type="entry name" value="Methylthioribulose-1-phosphate dehydratase"/>
    <property type="match status" value="1"/>
</dbReference>
<dbReference type="Gene3D" id="3.40.225.10">
    <property type="entry name" value="Class II aldolase/adducin N-terminal domain"/>
    <property type="match status" value="1"/>
</dbReference>
<dbReference type="HAMAP" id="MF_03116">
    <property type="entry name" value="Salvage_MtnB_euk"/>
    <property type="match status" value="1"/>
</dbReference>
<dbReference type="InterPro" id="IPR001303">
    <property type="entry name" value="Aldolase_II/adducin_N"/>
</dbReference>
<dbReference type="InterPro" id="IPR036409">
    <property type="entry name" value="Aldolase_II/adducin_N_sf"/>
</dbReference>
<dbReference type="InterPro" id="IPR017714">
    <property type="entry name" value="MethylthioRu-1-P_deHdtase_MtnB"/>
</dbReference>
<dbReference type="InterPro" id="IPR027514">
    <property type="entry name" value="Salvage_MtnB_euk"/>
</dbReference>
<dbReference type="NCBIfam" id="TIGR03328">
    <property type="entry name" value="salvage_mtnB"/>
    <property type="match status" value="1"/>
</dbReference>
<dbReference type="PANTHER" id="PTHR10640">
    <property type="entry name" value="METHYLTHIORIBULOSE-1-PHOSPHATE DEHYDRATASE"/>
    <property type="match status" value="1"/>
</dbReference>
<dbReference type="PANTHER" id="PTHR10640:SF7">
    <property type="entry name" value="METHYLTHIORIBULOSE-1-PHOSPHATE DEHYDRATASE"/>
    <property type="match status" value="1"/>
</dbReference>
<dbReference type="Pfam" id="PF00596">
    <property type="entry name" value="Aldolase_II"/>
    <property type="match status" value="1"/>
</dbReference>
<dbReference type="SMART" id="SM01007">
    <property type="entry name" value="Aldolase_II"/>
    <property type="match status" value="1"/>
</dbReference>
<dbReference type="SUPFAM" id="SSF53639">
    <property type="entry name" value="AraD/HMP-PK domain-like"/>
    <property type="match status" value="1"/>
</dbReference>
<reference key="1">
    <citation type="journal article" date="2009" name="Genome Res.">
        <title>Comparative genomics of the fungal pathogens Candida dubliniensis and Candida albicans.</title>
        <authorList>
            <person name="Jackson A.P."/>
            <person name="Gamble J.A."/>
            <person name="Yeomans T."/>
            <person name="Moran G.P."/>
            <person name="Saunders D."/>
            <person name="Harris D."/>
            <person name="Aslett M."/>
            <person name="Barrell J.F."/>
            <person name="Butler G."/>
            <person name="Citiulo F."/>
            <person name="Coleman D.C."/>
            <person name="de Groot P.W.J."/>
            <person name="Goodwin T.J."/>
            <person name="Quail M.A."/>
            <person name="McQuillan J."/>
            <person name="Munro C.A."/>
            <person name="Pain A."/>
            <person name="Poulter R.T."/>
            <person name="Rajandream M.A."/>
            <person name="Renauld H."/>
            <person name="Spiering M.J."/>
            <person name="Tivey A."/>
            <person name="Gow N.A.R."/>
            <person name="Barrell B."/>
            <person name="Sullivan D.J."/>
            <person name="Berriman M."/>
        </authorList>
    </citation>
    <scope>NUCLEOTIDE SEQUENCE [LARGE SCALE GENOMIC DNA]</scope>
    <source>
        <strain>CD36 / ATCC MYA-646 / CBS 7987 / NCPF 3949 / NRRL Y-17841</strain>
    </source>
</reference>
<protein>
    <recommendedName>
        <fullName evidence="1">Methylthioribulose-1-phosphate dehydratase</fullName>
        <shortName evidence="1">MTRu-1-P dehydratase</shortName>
        <ecNumber evidence="1">4.2.1.109</ecNumber>
    </recommendedName>
</protein>
<keyword id="KW-0028">Amino-acid biosynthesis</keyword>
<keyword id="KW-0963">Cytoplasm</keyword>
<keyword id="KW-0456">Lyase</keyword>
<keyword id="KW-0479">Metal-binding</keyword>
<keyword id="KW-0486">Methionine biosynthesis</keyword>
<keyword id="KW-0862">Zinc</keyword>
<sequence length="271" mass="30834">MSAPCHCQHADDDYSSIKKLSVLSPELQQEFKDPNHPANLICELCRLFYDNNWVTGTGGGISIRDVDGPNPNLVYIAPSGVQKERIQPWEMFLVELPQEKILRTPNDIPKELTKSYKYKPSACTPLFISCYTLRNAGACIHTHSQHAVMVTLFFENEKEFVISHIEQIKALPKLKYNQETGKIEKIGSMEYYDKLVIPIIENTPHEEDLTDSLQEAIKNYPGASAVLVRRHGIYVWGETVWKAKVYNEAIDYLLELAVKMKLAGIPLVKEE</sequence>
<feature type="chain" id="PRO_0000393815" description="Methylthioribulose-1-phosphate dehydratase">
    <location>
        <begin position="1"/>
        <end position="271"/>
    </location>
</feature>
<feature type="active site" description="Proton donor/acceptor" evidence="1">
    <location>
        <position position="166"/>
    </location>
</feature>
<feature type="binding site" evidence="1">
    <location>
        <position position="123"/>
    </location>
    <ligand>
        <name>substrate</name>
    </ligand>
</feature>
<feature type="binding site" evidence="1">
    <location>
        <position position="141"/>
    </location>
    <ligand>
        <name>Zn(2+)</name>
        <dbReference type="ChEBI" id="CHEBI:29105"/>
    </ligand>
</feature>
<feature type="binding site" evidence="1">
    <location>
        <position position="143"/>
    </location>
    <ligand>
        <name>Zn(2+)</name>
        <dbReference type="ChEBI" id="CHEBI:29105"/>
    </ligand>
</feature>
<feature type="binding site" evidence="1">
    <location>
        <position position="231"/>
    </location>
    <ligand>
        <name>Zn(2+)</name>
        <dbReference type="ChEBI" id="CHEBI:29105"/>
    </ligand>
</feature>
<evidence type="ECO:0000255" key="1">
    <source>
        <dbReference type="HAMAP-Rule" id="MF_03116"/>
    </source>
</evidence>
<comment type="function">
    <text evidence="1">Catalyzes the dehydration of methylthioribulose-1-phosphate (MTRu-1-P) into 2,3-diketo-5-methylthiopentyl-1-phosphate (DK-MTP-1-P).</text>
</comment>
<comment type="catalytic activity">
    <reaction evidence="1">
        <text>5-(methylsulfanyl)-D-ribulose 1-phosphate = 5-methylsulfanyl-2,3-dioxopentyl phosphate + H2O</text>
        <dbReference type="Rhea" id="RHEA:15549"/>
        <dbReference type="ChEBI" id="CHEBI:15377"/>
        <dbReference type="ChEBI" id="CHEBI:58548"/>
        <dbReference type="ChEBI" id="CHEBI:58828"/>
        <dbReference type="EC" id="4.2.1.109"/>
    </reaction>
</comment>
<comment type="cofactor">
    <cofactor evidence="1">
        <name>Zn(2+)</name>
        <dbReference type="ChEBI" id="CHEBI:29105"/>
    </cofactor>
    <text evidence="1">Binds 1 zinc ion per subunit.</text>
</comment>
<comment type="pathway">
    <text evidence="1">Amino-acid biosynthesis; L-methionine biosynthesis via salvage pathway; L-methionine from S-methyl-5-thio-alpha-D-ribose 1-phosphate: step 2/6.</text>
</comment>
<comment type="subcellular location">
    <subcellularLocation>
        <location evidence="1">Cytoplasm</location>
    </subcellularLocation>
</comment>
<comment type="similarity">
    <text evidence="1">Belongs to the aldolase class II family. MtnB subfamily.</text>
</comment>
<proteinExistence type="inferred from homology"/>
<gene>
    <name evidence="1" type="primary">MDE1</name>
    <name type="ORF">CD36_52610</name>
</gene>